<organism>
    <name type="scientific">Oxyuranus scutellatus scutellatus</name>
    <name type="common">Australian taipan</name>
    <name type="synonym">Coastal taipan</name>
    <dbReference type="NCBI Taxonomy" id="8667"/>
    <lineage>
        <taxon>Eukaryota</taxon>
        <taxon>Metazoa</taxon>
        <taxon>Chordata</taxon>
        <taxon>Craniata</taxon>
        <taxon>Vertebrata</taxon>
        <taxon>Euteleostomi</taxon>
        <taxon>Lepidosauria</taxon>
        <taxon>Squamata</taxon>
        <taxon>Bifurcata</taxon>
        <taxon>Unidentata</taxon>
        <taxon>Episquamata</taxon>
        <taxon>Toxicofera</taxon>
        <taxon>Serpentes</taxon>
        <taxon>Colubroidea</taxon>
        <taxon>Elapidae</taxon>
        <taxon>Hydrophiinae</taxon>
        <taxon>Oxyuranus</taxon>
    </lineage>
</organism>
<feature type="signal peptide" evidence="2">
    <location>
        <begin position="1"/>
        <end position="24"/>
    </location>
</feature>
<feature type="chain" id="PRO_0000377474" description="Kunitz-type serine protease inhibitor scutellin-2">
    <location>
        <begin position="25"/>
        <end position="83"/>
    </location>
</feature>
<feature type="domain" description="BPTI/Kunitz inhibitor" evidence="3">
    <location>
        <begin position="31"/>
        <end position="81"/>
    </location>
</feature>
<feature type="site" description="Reactive bond for trypsin" evidence="1">
    <location>
        <begin position="41"/>
        <end position="42"/>
    </location>
</feature>
<feature type="disulfide bond" evidence="3">
    <location>
        <begin position="31"/>
        <end position="81"/>
    </location>
</feature>
<feature type="disulfide bond" evidence="3">
    <location>
        <begin position="40"/>
        <end position="64"/>
    </location>
</feature>
<feature type="disulfide bond" evidence="3">
    <location>
        <begin position="56"/>
        <end position="77"/>
    </location>
</feature>
<dbReference type="EMBL" id="AY626929">
    <property type="protein sequence ID" value="AAT45405.1"/>
    <property type="molecule type" value="mRNA"/>
</dbReference>
<dbReference type="SMR" id="Q6ITB6"/>
<dbReference type="MEROPS" id="I02.052"/>
<dbReference type="GO" id="GO:0005615">
    <property type="term" value="C:extracellular space"/>
    <property type="evidence" value="ECO:0007669"/>
    <property type="project" value="TreeGrafter"/>
</dbReference>
<dbReference type="GO" id="GO:0004867">
    <property type="term" value="F:serine-type endopeptidase inhibitor activity"/>
    <property type="evidence" value="ECO:0007669"/>
    <property type="project" value="UniProtKB-KW"/>
</dbReference>
<dbReference type="CDD" id="cd22594">
    <property type="entry name" value="Kunitz_textilinin-like"/>
    <property type="match status" value="1"/>
</dbReference>
<dbReference type="FunFam" id="4.10.410.10:FF:000021">
    <property type="entry name" value="Serine protease inhibitor, putative"/>
    <property type="match status" value="1"/>
</dbReference>
<dbReference type="Gene3D" id="4.10.410.10">
    <property type="entry name" value="Pancreatic trypsin inhibitor Kunitz domain"/>
    <property type="match status" value="1"/>
</dbReference>
<dbReference type="InterPro" id="IPR002223">
    <property type="entry name" value="Kunitz_BPTI"/>
</dbReference>
<dbReference type="InterPro" id="IPR036880">
    <property type="entry name" value="Kunitz_BPTI_sf"/>
</dbReference>
<dbReference type="InterPro" id="IPR020901">
    <property type="entry name" value="Prtase_inh_Kunz-CS"/>
</dbReference>
<dbReference type="InterPro" id="IPR050098">
    <property type="entry name" value="TFPI/VKTCI-like"/>
</dbReference>
<dbReference type="PANTHER" id="PTHR10083">
    <property type="entry name" value="KUNITZ-TYPE PROTEASE INHIBITOR-RELATED"/>
    <property type="match status" value="1"/>
</dbReference>
<dbReference type="PANTHER" id="PTHR10083:SF376">
    <property type="entry name" value="SERINE PEPTIDASE INHIBITOR, KUNITZ TYPE, 3"/>
    <property type="match status" value="1"/>
</dbReference>
<dbReference type="Pfam" id="PF00014">
    <property type="entry name" value="Kunitz_BPTI"/>
    <property type="match status" value="1"/>
</dbReference>
<dbReference type="PRINTS" id="PR00759">
    <property type="entry name" value="BASICPTASE"/>
</dbReference>
<dbReference type="SMART" id="SM00131">
    <property type="entry name" value="KU"/>
    <property type="match status" value="1"/>
</dbReference>
<dbReference type="SUPFAM" id="SSF57362">
    <property type="entry name" value="BPTI-like"/>
    <property type="match status" value="1"/>
</dbReference>
<dbReference type="PROSITE" id="PS00280">
    <property type="entry name" value="BPTI_KUNITZ_1"/>
    <property type="match status" value="1"/>
</dbReference>
<dbReference type="PROSITE" id="PS50279">
    <property type="entry name" value="BPTI_KUNITZ_2"/>
    <property type="match status" value="1"/>
</dbReference>
<name>VKT2_OXYSC</name>
<reference key="1">
    <citation type="submission" date="2004-05" db="EMBL/GenBank/DDBJ databases">
        <title>Coastal Taipan venom gland cDNA encoding scutellin-2.</title>
        <authorList>
            <person name="Filippovich I."/>
            <person name="Sorokina N.I."/>
        </authorList>
    </citation>
    <scope>NUCLEOTIDE SEQUENCE [MRNA]</scope>
    <source>
        <tissue>Venom gland</tissue>
    </source>
</reference>
<accession>Q6ITB6</accession>
<keyword id="KW-1015">Disulfide bond</keyword>
<keyword id="KW-0646">Protease inhibitor</keyword>
<keyword id="KW-0964">Secreted</keyword>
<keyword id="KW-0722">Serine protease inhibitor</keyword>
<keyword id="KW-0732">Signal</keyword>
<comment type="function">
    <text evidence="1">Serine protease inhibitor.</text>
</comment>
<comment type="subcellular location">
    <subcellularLocation>
        <location evidence="1">Secreted</location>
    </subcellularLocation>
</comment>
<comment type="tissue specificity">
    <text>Expressed by the venom gland.</text>
</comment>
<comment type="similarity">
    <text evidence="4">Belongs to the venom Kunitz-type family.</text>
</comment>
<protein>
    <recommendedName>
        <fullName>Kunitz-type serine protease inhibitor scutellin-2</fullName>
    </recommendedName>
</protein>
<evidence type="ECO:0000250" key="1"/>
<evidence type="ECO:0000255" key="2"/>
<evidence type="ECO:0000255" key="3">
    <source>
        <dbReference type="PROSITE-ProRule" id="PRU00031"/>
    </source>
</evidence>
<evidence type="ECO:0000305" key="4"/>
<proteinExistence type="evidence at transcript level"/>
<sequence length="83" mass="9074">MSSGGLLLLLGLLTLWEVLTPVSSKDRPDFCELPADTGPCRVGFPSFYYNPDEKKCLEFIYGGCEGNANNFITKEECESTCAA</sequence>